<evidence type="ECO:0000255" key="1">
    <source>
        <dbReference type="HAMAP-Rule" id="MF_01528"/>
    </source>
</evidence>
<sequence>MSPSDVPINWKRNLTVAWLGCFLTGAAFSLVMPFLPLYVEQLGVTGHSALNMWSGLVFSITFLFSAIASPFWGGLADRKGRKIMLLRSALGMAIVMLLMGLAQNIWQFLLLRALLGLLGGFVPNANALIATQVPRNKSGWALGTLSTGGVSGALLGPLAGGLLADQYGLRPVFFITASVLLVCFLLTLFFTRERFQPVSKKEMLHVREVVGSLKNPKLVLSLFVTTLIIQVATGSIAPILTLYVRELAGNVSNIAFISGMIASVPGVAALLSAPRLGKLGDRIGPEKILITALIISVLLLIPMSFVQTPWQLGVLRFLLGAADGALLPAVQTLLVYNASNQIAGRIFSYNQSFRDIGNVTGPLMGAAISASYGFRAVFCVTAGVVLFNAIYSWNSLRRRRETLAAK</sequence>
<comment type="subcellular location">
    <subcellularLocation>
        <location evidence="1">Cell inner membrane</location>
        <topology evidence="1">Multi-pass membrane protein</topology>
    </subcellularLocation>
</comment>
<comment type="similarity">
    <text evidence="1">Belongs to the major facilitator superfamily. DHA1 family. MdtG (TC 2.A.1.2.20) subfamily.</text>
</comment>
<keyword id="KW-0997">Cell inner membrane</keyword>
<keyword id="KW-1003">Cell membrane</keyword>
<keyword id="KW-0472">Membrane</keyword>
<keyword id="KW-1185">Reference proteome</keyword>
<keyword id="KW-0812">Transmembrane</keyword>
<keyword id="KW-1133">Transmembrane helix</keyword>
<keyword id="KW-0813">Transport</keyword>
<accession>A8AI28</accession>
<dbReference type="EMBL" id="CP000822">
    <property type="protein sequence ID" value="ABV13140.1"/>
    <property type="molecule type" value="Genomic_DNA"/>
</dbReference>
<dbReference type="RefSeq" id="WP_012132877.1">
    <property type="nucleotide sequence ID" value="NC_009792.1"/>
</dbReference>
<dbReference type="SMR" id="A8AI28"/>
<dbReference type="STRING" id="290338.CKO_02014"/>
<dbReference type="GeneID" id="45135979"/>
<dbReference type="KEGG" id="cko:CKO_02014"/>
<dbReference type="HOGENOM" id="CLU_001265_57_3_6"/>
<dbReference type="OrthoDB" id="65739at2"/>
<dbReference type="Proteomes" id="UP000008148">
    <property type="component" value="Chromosome"/>
</dbReference>
<dbReference type="GO" id="GO:0005886">
    <property type="term" value="C:plasma membrane"/>
    <property type="evidence" value="ECO:0007669"/>
    <property type="project" value="UniProtKB-SubCell"/>
</dbReference>
<dbReference type="GO" id="GO:0022857">
    <property type="term" value="F:transmembrane transporter activity"/>
    <property type="evidence" value="ECO:0007669"/>
    <property type="project" value="UniProtKB-UniRule"/>
</dbReference>
<dbReference type="CDD" id="cd17391">
    <property type="entry name" value="MFS_MdtG_MDR_like"/>
    <property type="match status" value="1"/>
</dbReference>
<dbReference type="FunFam" id="1.20.1250.20:FF:000020">
    <property type="entry name" value="Multidrug resistance protein MdtG"/>
    <property type="match status" value="1"/>
</dbReference>
<dbReference type="FunFam" id="1.20.1250.20:FF:000022">
    <property type="entry name" value="Multidrug resistance protein MdtG"/>
    <property type="match status" value="1"/>
</dbReference>
<dbReference type="Gene3D" id="1.20.1250.20">
    <property type="entry name" value="MFS general substrate transporter like domains"/>
    <property type="match status" value="2"/>
</dbReference>
<dbReference type="HAMAP" id="MF_01528">
    <property type="entry name" value="MFS_MdtG"/>
    <property type="match status" value="1"/>
</dbReference>
<dbReference type="InterPro" id="IPR011701">
    <property type="entry name" value="MFS"/>
</dbReference>
<dbReference type="InterPro" id="IPR020846">
    <property type="entry name" value="MFS_dom"/>
</dbReference>
<dbReference type="InterPro" id="IPR050497">
    <property type="entry name" value="MFS_MdtG_subfamily"/>
</dbReference>
<dbReference type="InterPro" id="IPR036259">
    <property type="entry name" value="MFS_trans_sf"/>
</dbReference>
<dbReference type="InterPro" id="IPR023692">
    <property type="entry name" value="Mutidrug-R_MdtG"/>
</dbReference>
<dbReference type="InterPro" id="IPR001958">
    <property type="entry name" value="Tet-R_TetA/multi-R_MdtG-like"/>
</dbReference>
<dbReference type="NCBIfam" id="NF007372">
    <property type="entry name" value="PRK09874.1"/>
    <property type="match status" value="1"/>
</dbReference>
<dbReference type="PANTHER" id="PTHR43414">
    <property type="entry name" value="MULTIDRUG RESISTANCE PROTEIN MDTG"/>
    <property type="match status" value="1"/>
</dbReference>
<dbReference type="PANTHER" id="PTHR43414:SF6">
    <property type="entry name" value="MULTIDRUG RESISTANCE PROTEIN MDTG"/>
    <property type="match status" value="1"/>
</dbReference>
<dbReference type="Pfam" id="PF07690">
    <property type="entry name" value="MFS_1"/>
    <property type="match status" value="1"/>
</dbReference>
<dbReference type="PRINTS" id="PR01035">
    <property type="entry name" value="TCRTETA"/>
</dbReference>
<dbReference type="SUPFAM" id="SSF103473">
    <property type="entry name" value="MFS general substrate transporter"/>
    <property type="match status" value="2"/>
</dbReference>
<dbReference type="PROSITE" id="PS50850">
    <property type="entry name" value="MFS"/>
    <property type="match status" value="1"/>
</dbReference>
<proteinExistence type="inferred from homology"/>
<organism>
    <name type="scientific">Citrobacter koseri (strain ATCC BAA-895 / CDC 4225-83 / SGSC4696)</name>
    <dbReference type="NCBI Taxonomy" id="290338"/>
    <lineage>
        <taxon>Bacteria</taxon>
        <taxon>Pseudomonadati</taxon>
        <taxon>Pseudomonadota</taxon>
        <taxon>Gammaproteobacteria</taxon>
        <taxon>Enterobacterales</taxon>
        <taxon>Enterobacteriaceae</taxon>
        <taxon>Citrobacter</taxon>
    </lineage>
</organism>
<protein>
    <recommendedName>
        <fullName evidence="1">Multidrug resistance protein MdtG</fullName>
    </recommendedName>
</protein>
<reference key="1">
    <citation type="submission" date="2007-08" db="EMBL/GenBank/DDBJ databases">
        <authorList>
            <consortium name="The Citrobacter koseri Genome Sequencing Project"/>
            <person name="McClelland M."/>
            <person name="Sanderson E.K."/>
            <person name="Porwollik S."/>
            <person name="Spieth J."/>
            <person name="Clifton W.S."/>
            <person name="Latreille P."/>
            <person name="Courtney L."/>
            <person name="Wang C."/>
            <person name="Pepin K."/>
            <person name="Bhonagiri V."/>
            <person name="Nash W."/>
            <person name="Johnson M."/>
            <person name="Thiruvilangam P."/>
            <person name="Wilson R."/>
        </authorList>
    </citation>
    <scope>NUCLEOTIDE SEQUENCE [LARGE SCALE GENOMIC DNA]</scope>
    <source>
        <strain>ATCC BAA-895 / CDC 4225-83 / SGSC4696</strain>
    </source>
</reference>
<feature type="chain" id="PRO_1000068673" description="Multidrug resistance protein MdtG">
    <location>
        <begin position="1"/>
        <end position="406"/>
    </location>
</feature>
<feature type="transmembrane region" description="Helical" evidence="1">
    <location>
        <begin position="16"/>
        <end position="36"/>
    </location>
</feature>
<feature type="transmembrane region" description="Helical" evidence="1">
    <location>
        <begin position="56"/>
        <end position="76"/>
    </location>
</feature>
<feature type="transmembrane region" description="Helical" evidence="1">
    <location>
        <begin position="90"/>
        <end position="110"/>
    </location>
</feature>
<feature type="transmembrane region" description="Helical" evidence="1">
    <location>
        <begin position="113"/>
        <end position="133"/>
    </location>
</feature>
<feature type="transmembrane region" description="Helical" evidence="1">
    <location>
        <begin position="144"/>
        <end position="164"/>
    </location>
</feature>
<feature type="transmembrane region" description="Helical" evidence="1">
    <location>
        <begin position="171"/>
        <end position="191"/>
    </location>
</feature>
<feature type="transmembrane region" description="Helical" evidence="1">
    <location>
        <begin position="222"/>
        <end position="242"/>
    </location>
</feature>
<feature type="transmembrane region" description="Helical" evidence="1">
    <location>
        <begin position="254"/>
        <end position="274"/>
    </location>
</feature>
<feature type="transmembrane region" description="Helical" evidence="1">
    <location>
        <begin position="288"/>
        <end position="308"/>
    </location>
</feature>
<feature type="transmembrane region" description="Helical" evidence="1">
    <location>
        <begin position="317"/>
        <end position="337"/>
    </location>
</feature>
<feature type="transmembrane region" description="Helical" evidence="1">
    <location>
        <begin position="376"/>
        <end position="396"/>
    </location>
</feature>
<name>MDTG_CITK8</name>
<gene>
    <name evidence="1" type="primary">mdtG</name>
    <name type="ordered locus">CKO_02014</name>
</gene>